<gene>
    <name type="primary">odh</name>
</gene>
<keyword id="KW-0002">3D-structure</keyword>
<keyword id="KW-0520">NAD</keyword>
<keyword id="KW-0560">Oxidoreductase</keyword>
<name>ODH_ARTSC</name>
<protein>
    <recommendedName>
        <fullName>Opine dehydrogenase</fullName>
        <ecNumber>1.5.1.28</ecNumber>
    </recommendedName>
    <alternativeName>
        <fullName>N-(1-D-carboxyethyl)-L-norvaline dehydrogenase</fullName>
    </alternativeName>
</protein>
<sequence length="359" mass="37937">MIESKTYAVLGLGNGGHAFAAYLALKGQSVLAWDIDAQRIKEIQDRGAIIAEGPGLAGTAHPDLLTSDIGLAVKDADVILIVVPAIHHASIAANIASYISEGQLIILNPGATGGALEFRKILRENGAPEVTIGETSSMLFTCRSERPGQVTVNAIKGAMDFACLPAAKAGWALEQIGSVLPQYVAVENVLHTSLTNVNAVMHPLPTLLNAARCESGTPFQYYLEGITPSVGSLAEKVDAERIAIAKAFDLNVPSVCEWYKESYGQSPATIYEAVQGNPAYRGIAGPINLNTRYFFEDVSTGLVPLSELGRAVNVPTPLIDAVLDLISSLIDTDFRKEGRTLEKLGLSGLTAAGIRSAVE</sequence>
<feature type="chain" id="PRO_0000179982" description="Opine dehydrogenase">
    <location>
        <begin position="1"/>
        <end position="359"/>
    </location>
</feature>
<feature type="strand" evidence="2">
    <location>
        <begin position="6"/>
        <end position="10"/>
    </location>
</feature>
<feature type="helix" evidence="2">
    <location>
        <begin position="14"/>
        <end position="25"/>
    </location>
</feature>
<feature type="strand" evidence="2">
    <location>
        <begin position="29"/>
        <end position="33"/>
    </location>
</feature>
<feature type="helix" evidence="2">
    <location>
        <begin position="37"/>
        <end position="46"/>
    </location>
</feature>
<feature type="strand" evidence="2">
    <location>
        <begin position="48"/>
        <end position="55"/>
    </location>
</feature>
<feature type="strand" evidence="2">
    <location>
        <begin position="58"/>
        <end position="60"/>
    </location>
</feature>
<feature type="strand" evidence="2">
    <location>
        <begin position="63"/>
        <end position="67"/>
    </location>
</feature>
<feature type="helix" evidence="2">
    <location>
        <begin position="69"/>
        <end position="73"/>
    </location>
</feature>
<feature type="strand" evidence="2">
    <location>
        <begin position="77"/>
        <end position="81"/>
    </location>
</feature>
<feature type="helix" evidence="2">
    <location>
        <begin position="85"/>
        <end position="87"/>
    </location>
</feature>
<feature type="helix" evidence="2">
    <location>
        <begin position="88"/>
        <end position="95"/>
    </location>
</feature>
<feature type="helix" evidence="2">
    <location>
        <begin position="96"/>
        <end position="98"/>
    </location>
</feature>
<feature type="strand" evidence="2">
    <location>
        <begin position="104"/>
        <end position="109"/>
    </location>
</feature>
<feature type="helix" evidence="2">
    <location>
        <begin position="114"/>
        <end position="124"/>
    </location>
</feature>
<feature type="strand" evidence="2">
    <location>
        <begin position="131"/>
        <end position="137"/>
    </location>
</feature>
<feature type="strand" evidence="2">
    <location>
        <begin position="139"/>
        <end position="143"/>
    </location>
</feature>
<feature type="strand" evidence="2">
    <location>
        <begin position="149"/>
        <end position="155"/>
    </location>
</feature>
<feature type="strand" evidence="2">
    <location>
        <begin position="159"/>
        <end position="165"/>
    </location>
</feature>
<feature type="helix" evidence="2">
    <location>
        <begin position="166"/>
        <end position="168"/>
    </location>
</feature>
<feature type="helix" evidence="2">
    <location>
        <begin position="169"/>
        <end position="176"/>
    </location>
</feature>
<feature type="turn" evidence="2">
    <location>
        <begin position="177"/>
        <end position="179"/>
    </location>
</feature>
<feature type="strand" evidence="2">
    <location>
        <begin position="183"/>
        <end position="185"/>
    </location>
</feature>
<feature type="helix" evidence="2">
    <location>
        <begin position="189"/>
        <end position="194"/>
    </location>
</feature>
<feature type="helix" evidence="2">
    <location>
        <begin position="197"/>
        <end position="201"/>
    </location>
</feature>
<feature type="helix" evidence="2">
    <location>
        <begin position="203"/>
        <end position="207"/>
    </location>
</feature>
<feature type="helix" evidence="2">
    <location>
        <begin position="210"/>
        <end position="214"/>
    </location>
</feature>
<feature type="helix" evidence="2">
    <location>
        <begin position="221"/>
        <end position="225"/>
    </location>
</feature>
<feature type="helix" evidence="2">
    <location>
        <begin position="228"/>
        <end position="246"/>
    </location>
</feature>
<feature type="turn" evidence="2">
    <location>
        <begin position="247"/>
        <end position="249"/>
    </location>
</feature>
<feature type="helix" evidence="2">
    <location>
        <begin position="255"/>
        <end position="258"/>
    </location>
</feature>
<feature type="helix" evidence="2">
    <location>
        <begin position="270"/>
        <end position="275"/>
    </location>
</feature>
<feature type="helix" evidence="2">
    <location>
        <begin position="278"/>
        <end position="280"/>
    </location>
</feature>
<feature type="strand" evidence="2">
    <location>
        <begin position="287"/>
        <end position="289"/>
    </location>
</feature>
<feature type="helix" evidence="2">
    <location>
        <begin position="292"/>
        <end position="299"/>
    </location>
</feature>
<feature type="helix" evidence="2">
    <location>
        <begin position="302"/>
        <end position="311"/>
    </location>
</feature>
<feature type="helix" evidence="2">
    <location>
        <begin position="317"/>
        <end position="329"/>
    </location>
</feature>
<feature type="helix" evidence="2">
    <location>
        <begin position="334"/>
        <end position="337"/>
    </location>
</feature>
<feature type="turn" evidence="2">
    <location>
        <begin position="341"/>
        <end position="345"/>
    </location>
</feature>
<feature type="helix" evidence="2">
    <location>
        <begin position="351"/>
        <end position="358"/>
    </location>
</feature>
<evidence type="ECO:0000305" key="1"/>
<evidence type="ECO:0007829" key="2">
    <source>
        <dbReference type="PDB" id="1BG6"/>
    </source>
</evidence>
<accession>Q44297</accession>
<organism>
    <name type="scientific">Arthrobacter sp. (strain 1C)</name>
    <dbReference type="NCBI Taxonomy" id="79670"/>
    <lineage>
        <taxon>Bacteria</taxon>
        <taxon>Bacillati</taxon>
        <taxon>Actinomycetota</taxon>
        <taxon>Actinomycetes</taxon>
        <taxon>Micrococcales</taxon>
        <taxon>Micrococcaceae</taxon>
        <taxon>Arthrobacter</taxon>
    </lineage>
</organism>
<comment type="function">
    <text>In the forward direction also acts on secondary amine dicarboxylates such as N-(1-carboxyethyl)methionine and N-(1-carboxyethyl)phenylalanine. In the reverse direction, the enzyme also acts on neutral amino acids as an amino donor. They include L-amino acids such as 2-aminopentanoic acid, 2-aminobutyric acid, 2-aminohexanoic acid, 3-chloroalanine, O-acetylserine, methionine, isoleucine, valine, phenylalanine, leucine and alanine.</text>
</comment>
<comment type="catalytic activity">
    <reaction>
        <text>(2S)-2-[(R)-1-carboxyethylamino]pentanoate + NAD(+) + H2O = L-2-aminopentanoate + pyruvate + NADH + H(+)</text>
        <dbReference type="Rhea" id="RHEA:21592"/>
        <dbReference type="ChEBI" id="CHEBI:15361"/>
        <dbReference type="ChEBI" id="CHEBI:15377"/>
        <dbReference type="ChEBI" id="CHEBI:15378"/>
        <dbReference type="ChEBI" id="CHEBI:57540"/>
        <dbReference type="ChEBI" id="CHEBI:57945"/>
        <dbReference type="ChEBI" id="CHEBI:58441"/>
        <dbReference type="ChEBI" id="CHEBI:58799"/>
        <dbReference type="EC" id="1.5.1.28"/>
    </reaction>
</comment>
<comment type="subunit">
    <text>Homodimer.</text>
</comment>
<comment type="similarity">
    <text evidence="1">Belongs to the lysopine/nopaline/octopine/opine/vitopine dehydrogenases family.</text>
</comment>
<proteinExistence type="evidence at protein level"/>
<dbReference type="EC" id="1.5.1.28"/>
<dbReference type="EMBL" id="D45211">
    <property type="protein sequence ID" value="BAA08145.1"/>
    <property type="molecule type" value="Genomic_DNA"/>
</dbReference>
<dbReference type="PIR" id="I39664">
    <property type="entry name" value="I39664"/>
</dbReference>
<dbReference type="PDB" id="1BG6">
    <property type="method" value="X-ray"/>
    <property type="resolution" value="1.80 A"/>
    <property type="chains" value="A=1-359"/>
</dbReference>
<dbReference type="PDBsum" id="1BG6"/>
<dbReference type="SMR" id="Q44297"/>
<dbReference type="KEGG" id="ag:BAA08145"/>
<dbReference type="EvolutionaryTrace" id="Q44297"/>
<dbReference type="GO" id="GO:0047129">
    <property type="term" value="F:opine dehydrogenase activity"/>
    <property type="evidence" value="ECO:0007669"/>
    <property type="project" value="UniProtKB-EC"/>
</dbReference>
<dbReference type="Gene3D" id="1.10.1040.10">
    <property type="entry name" value="N-(1-d-carboxylethyl)-l-norvaline Dehydrogenase, domain 2"/>
    <property type="match status" value="1"/>
</dbReference>
<dbReference type="Gene3D" id="3.40.50.720">
    <property type="entry name" value="NAD(P)-binding Rossmann-like Domain"/>
    <property type="match status" value="1"/>
</dbReference>
<dbReference type="InterPro" id="IPR008927">
    <property type="entry name" value="6-PGluconate_DH-like_C_sf"/>
</dbReference>
<dbReference type="InterPro" id="IPR013328">
    <property type="entry name" value="6PGD_dom2"/>
</dbReference>
<dbReference type="InterPro" id="IPR013332">
    <property type="entry name" value="KPR_N"/>
</dbReference>
<dbReference type="InterPro" id="IPR036291">
    <property type="entry name" value="NAD(P)-bd_dom_sf"/>
</dbReference>
<dbReference type="InterPro" id="IPR051729">
    <property type="entry name" value="Opine/Lysopine_DH"/>
</dbReference>
<dbReference type="InterPro" id="IPR003421">
    <property type="entry name" value="Opine_DH"/>
</dbReference>
<dbReference type="PANTHER" id="PTHR38015">
    <property type="entry name" value="BLR6086 PROTEIN"/>
    <property type="match status" value="1"/>
</dbReference>
<dbReference type="PANTHER" id="PTHR38015:SF1">
    <property type="entry name" value="OPINE DEHYDROGENASE DOMAIN-CONTAINING PROTEIN"/>
    <property type="match status" value="1"/>
</dbReference>
<dbReference type="Pfam" id="PF02558">
    <property type="entry name" value="ApbA"/>
    <property type="match status" value="1"/>
</dbReference>
<dbReference type="Pfam" id="PF02317">
    <property type="entry name" value="Octopine_DH"/>
    <property type="match status" value="1"/>
</dbReference>
<dbReference type="SUPFAM" id="SSF48179">
    <property type="entry name" value="6-phosphogluconate dehydrogenase C-terminal domain-like"/>
    <property type="match status" value="1"/>
</dbReference>
<dbReference type="SUPFAM" id="SSF51735">
    <property type="entry name" value="NAD(P)-binding Rossmann-fold domains"/>
    <property type="match status" value="1"/>
</dbReference>
<reference key="1">
    <citation type="journal article" date="1995" name="Appl. Environ. Microbiol.">
        <title>Cloning, nucleotide sequencing, and expression of an opine dehydrogenase gene from Arthrobacter sp. strain 1C.</title>
        <authorList>
            <person name="Dairi T."/>
            <person name="Asano Y."/>
        </authorList>
    </citation>
    <scope>NUCLEOTIDE SEQUENCE [GENOMIC DNA]</scope>
</reference>
<reference key="2">
    <citation type="journal article" date="1989" name="J. Bacteriol.">
        <title>A new NAD+-dependent opine dehydrogenase from Arthrobacter sp. strain 1C.</title>
        <authorList>
            <person name="Asano Y."/>
            <person name="Yamaguchi K."/>
            <person name="Kondo K."/>
        </authorList>
    </citation>
    <scope>CHARACTERIZATION</scope>
</reference>
<reference key="3">
    <citation type="journal article" date="1998" name="Nat. Struct. Biol.">
        <title>Crystal structure and active site location of N-(1-D-carboxylethyl)-L-norvaline dehydrogenase.</title>
        <authorList>
            <person name="Britton K.L."/>
            <person name="Asano Y."/>
            <person name="Rice D.W."/>
        </authorList>
    </citation>
    <scope>X-RAY CRYSTALLOGRAPHY (1.8 ANGSTROMS)</scope>
</reference>